<accession>Q6V3V8</accession>
<reference evidence="4" key="1">
    <citation type="journal article" date="2004" name="Cell Cycle">
        <title>Structure predictions and interaction studies indicate homology of separase N-terminal regulatory domains and Drosophila THR.</title>
        <authorList>
            <person name="Jaeger H."/>
            <person name="Herzig B."/>
            <person name="Herzig A."/>
            <person name="Sticht H."/>
            <person name="Lehner C.F."/>
            <person name="Heidmann S."/>
        </authorList>
    </citation>
    <scope>NUCLEOTIDE SEQUENCE [GENOMIC DNA]</scope>
</reference>
<organism>
    <name type="scientific">Drosophila virilis</name>
    <name type="common">Fruit fly</name>
    <dbReference type="NCBI Taxonomy" id="7244"/>
    <lineage>
        <taxon>Eukaryota</taxon>
        <taxon>Metazoa</taxon>
        <taxon>Ecdysozoa</taxon>
        <taxon>Arthropoda</taxon>
        <taxon>Hexapoda</taxon>
        <taxon>Insecta</taxon>
        <taxon>Pterygota</taxon>
        <taxon>Neoptera</taxon>
        <taxon>Endopterygota</taxon>
        <taxon>Diptera</taxon>
        <taxon>Brachycera</taxon>
        <taxon>Muscomorpha</taxon>
        <taxon>Ephydroidea</taxon>
        <taxon>Drosophilidae</taxon>
        <taxon>Drosophila</taxon>
    </lineage>
</organism>
<evidence type="ECO:0000250" key="1"/>
<evidence type="ECO:0000250" key="2">
    <source>
        <dbReference type="UniProtKB" id="P42286"/>
    </source>
</evidence>
<evidence type="ECO:0000256" key="3">
    <source>
        <dbReference type="SAM" id="MobiDB-lite"/>
    </source>
</evidence>
<evidence type="ECO:0000312" key="4">
    <source>
        <dbReference type="EMBL" id="AAQ72555.1"/>
    </source>
</evidence>
<proteinExistence type="inferred from homology"/>
<feature type="chain" id="PRO_0000072528" description="Protein three rows">
    <location>
        <begin position="1"/>
        <end position="1411"/>
    </location>
</feature>
<feature type="region of interest" description="Separase cleavage-site" evidence="2">
    <location>
        <begin position="1065"/>
        <end position="1071"/>
    </location>
</feature>
<feature type="region of interest" description="Disordered" evidence="3">
    <location>
        <begin position="1221"/>
        <end position="1240"/>
    </location>
</feature>
<feature type="region of interest" description="Disordered" evidence="3">
    <location>
        <begin position="1268"/>
        <end position="1301"/>
    </location>
</feature>
<feature type="region of interest" description="Disordered" evidence="3">
    <location>
        <begin position="1330"/>
        <end position="1411"/>
    </location>
</feature>
<feature type="compositionally biased region" description="Low complexity" evidence="3">
    <location>
        <begin position="1270"/>
        <end position="1289"/>
    </location>
</feature>
<feature type="compositionally biased region" description="Low complexity" evidence="3">
    <location>
        <begin position="1386"/>
        <end position="1398"/>
    </location>
</feature>
<gene>
    <name type="primary">thr</name>
</gene>
<sequence length="1411" mass="160080">MSLGDVKEQLRGSRTEAKNAAKLIQVQFERVRNGGTTSVALRALKYELNILRQLCCALQENFHQHADIYCDIAADMLPHVAPHLPQPDYWVNHLMSLQYIHHALCREQTIKQCQRFYELINAQSCQMQNKSEYKYYIDIHIRHVYFFGHQLGKQSAASEAKAQLCQALQALGKLLENMLQLKAEQNEGYSELMGELNQLLGKRSIGYLKNLASLPLTAMNRLWKPLFKLIACNGGTTDQLNAQFSEYLSALLALLQLDDNVWQLQQSEAQAQTPLSLQLLHSCRELYKNQTAQNNVLQLLYNYLKLLNTQSADLKRSYIDLAKKFVHFFEHKAVSHVQEQWYLDFLFVLVRVQKHLHQIDNKVPSLERFWQCLGGQDSATAYAAHFELLQCLTSRVMKIGRGSPLAASCSGNDASCPSVLKHCVFTLGCCATVAYSSWQPEAQATLPKASQLCLASIIHYAIDVAKVTKCLTPNSSELVTFAWYLINMAEKVTTATQMYLLEHLLKPLQELRPLLSPPYAQQLVRRLFKASAHSSNPELSALLHGAYIVSMSCPARQFQQLCVFYHTPKNDTEQCLLELCEKSPLCSPLNATEKRKLYELDMLAVLANKKTPKLLQSLLRHCQTDYQMVLLGRQMRTDKRSAGQQIEELRVRLQRLGRKQQLTRLQQLILGHATVTKLLEAAETQKIKIHIKEMTEKTLEVLLVKYKLFDLTISSEMPLLELATTAIGAFESFYEQADAEPLSSDEALIDWEALIDDGIAAAMALSTMGYIPQADNAWLLLLRICRLLGDRFNYLRALSHFLPRYTQHALFDLPAEVSHAEQLLDELWPQLHAAHLLKRHHTTVLLCLCNLALYYARLDCVRHAQLLLLHAQRLRLEFEERAGKCDIIQLTIQTVRFRMCYQQRHCRSLARLPTALQQLDTLTESVRSFTCISSMDNGALILLLGDMVRDTTECTANRLSELPNFSNSLLQLLLQSGLVLRAVELLISWLWTNLRMECLDKAHSKLRLIEHFLGMQPLLESRAALEQTSNKGSLTLAPMDAQSKHMTELVGKMLVMQLEQSGACVEPIRKQQQLTMSSPRRELPLPSARPKLQRYVSLDMQQSHPMLRSSVQLQCIYFMAGCLHARLYFLNREHEQLDDFYALANAWLQQNAARGNALGHMLLVLHIYQANYLRARRRQQQAIELTETALKLAGSEQLQQRIDVNYRYNLLLQLRTAQLELEPPSKPQNPRRALTFNISPEEKLPRPVRKVATASKKPAKFAIYTEDVRPASSTTSSSSSSSSSENASSPERKSTKSKSPKRLDLNACQLIDIIDLSDDETEAVVQLQPAKSTSALSTRSTRTRAQRQPDTLVAPLRRTATAPNPLSAEATPKTIGTRARARRQNTAEQPTTTTTATPKVDSVSSRRRHRN</sequence>
<dbReference type="EMBL" id="AY352651">
    <property type="protein sequence ID" value="AAQ72555.1"/>
    <property type="molecule type" value="Genomic_DNA"/>
</dbReference>
<dbReference type="eggNOG" id="ENOG502T8T7">
    <property type="taxonomic scope" value="Eukaryota"/>
</dbReference>
<dbReference type="OrthoDB" id="7735752at2759"/>
<dbReference type="GO" id="GO:0005737">
    <property type="term" value="C:cytoplasm"/>
    <property type="evidence" value="ECO:0000250"/>
    <property type="project" value="UniProtKB"/>
</dbReference>
<dbReference type="GO" id="GO:0051301">
    <property type="term" value="P:cell division"/>
    <property type="evidence" value="ECO:0007669"/>
    <property type="project" value="UniProtKB-KW"/>
</dbReference>
<dbReference type="GO" id="GO:0007443">
    <property type="term" value="P:Malpighian tubule morphogenesis"/>
    <property type="evidence" value="ECO:0000250"/>
    <property type="project" value="UniProtKB"/>
</dbReference>
<dbReference type="GO" id="GO:0000070">
    <property type="term" value="P:mitotic sister chromatid segregation"/>
    <property type="evidence" value="ECO:0000250"/>
    <property type="project" value="UniProtKB"/>
</dbReference>
<comment type="function">
    <text evidence="2">Required specifically for chromosome disjunction during all mitoses; maternally provided protein is sufficient until mitosis 14 then zygotic protein is required. Involved in formation and/or maintenance of epithelial structures: bud extension during Malpighian tubule development, and foregut and hindgut morphogenesis (By similarity).</text>
</comment>
<comment type="subunit">
    <text evidence="2">Interacts with pim and Sse. Cleavage of thr contributes to inactivation of Sse (By similarity).</text>
</comment>
<comment type="subcellular location">
    <subcellularLocation>
        <location evidence="1">Cytoplasm</location>
    </subcellularLocation>
</comment>
<name>THR_DROVI</name>
<protein>
    <recommendedName>
        <fullName>Protein three rows</fullName>
    </recommendedName>
</protein>
<keyword id="KW-0131">Cell cycle</keyword>
<keyword id="KW-0132">Cell division</keyword>
<keyword id="KW-0963">Cytoplasm</keyword>
<keyword id="KW-0217">Developmental protein</keyword>
<keyword id="KW-0498">Mitosis</keyword>